<dbReference type="EC" id="5.1.1.1" evidence="1"/>
<dbReference type="EMBL" id="CR555306">
    <property type="protein sequence ID" value="CAI08114.1"/>
    <property type="molecule type" value="Genomic_DNA"/>
</dbReference>
<dbReference type="RefSeq" id="WP_011237807.1">
    <property type="nucleotide sequence ID" value="NC_006513.1"/>
</dbReference>
<dbReference type="SMR" id="Q5P3K0"/>
<dbReference type="STRING" id="76114.ebA3534"/>
<dbReference type="KEGG" id="eba:ebA3534"/>
<dbReference type="eggNOG" id="COG0787">
    <property type="taxonomic scope" value="Bacteria"/>
</dbReference>
<dbReference type="HOGENOM" id="CLU_028393_1_0_4"/>
<dbReference type="OrthoDB" id="9813814at2"/>
<dbReference type="UniPathway" id="UPA00042">
    <property type="reaction ID" value="UER00497"/>
</dbReference>
<dbReference type="Proteomes" id="UP000006552">
    <property type="component" value="Chromosome"/>
</dbReference>
<dbReference type="GO" id="GO:0005829">
    <property type="term" value="C:cytosol"/>
    <property type="evidence" value="ECO:0007669"/>
    <property type="project" value="TreeGrafter"/>
</dbReference>
<dbReference type="GO" id="GO:0008784">
    <property type="term" value="F:alanine racemase activity"/>
    <property type="evidence" value="ECO:0007669"/>
    <property type="project" value="UniProtKB-UniRule"/>
</dbReference>
<dbReference type="GO" id="GO:0030170">
    <property type="term" value="F:pyridoxal phosphate binding"/>
    <property type="evidence" value="ECO:0007669"/>
    <property type="project" value="UniProtKB-UniRule"/>
</dbReference>
<dbReference type="GO" id="GO:0030632">
    <property type="term" value="P:D-alanine biosynthetic process"/>
    <property type="evidence" value="ECO:0007669"/>
    <property type="project" value="UniProtKB-UniRule"/>
</dbReference>
<dbReference type="CDD" id="cd06827">
    <property type="entry name" value="PLPDE_III_AR_proteobact"/>
    <property type="match status" value="1"/>
</dbReference>
<dbReference type="FunFam" id="3.20.20.10:FF:000002">
    <property type="entry name" value="Alanine racemase"/>
    <property type="match status" value="1"/>
</dbReference>
<dbReference type="Gene3D" id="3.20.20.10">
    <property type="entry name" value="Alanine racemase"/>
    <property type="match status" value="1"/>
</dbReference>
<dbReference type="Gene3D" id="2.40.37.10">
    <property type="entry name" value="Lyase, Ornithine Decarboxylase, Chain A, domain 1"/>
    <property type="match status" value="1"/>
</dbReference>
<dbReference type="HAMAP" id="MF_01201">
    <property type="entry name" value="Ala_racemase"/>
    <property type="match status" value="1"/>
</dbReference>
<dbReference type="InterPro" id="IPR000821">
    <property type="entry name" value="Ala_racemase"/>
</dbReference>
<dbReference type="InterPro" id="IPR009006">
    <property type="entry name" value="Ala_racemase/Decarboxylase_C"/>
</dbReference>
<dbReference type="InterPro" id="IPR011079">
    <property type="entry name" value="Ala_racemase_C"/>
</dbReference>
<dbReference type="InterPro" id="IPR001608">
    <property type="entry name" value="Ala_racemase_N"/>
</dbReference>
<dbReference type="InterPro" id="IPR020622">
    <property type="entry name" value="Ala_racemase_pyridoxalP-BS"/>
</dbReference>
<dbReference type="InterPro" id="IPR029066">
    <property type="entry name" value="PLP-binding_barrel"/>
</dbReference>
<dbReference type="NCBIfam" id="TIGR00492">
    <property type="entry name" value="alr"/>
    <property type="match status" value="1"/>
</dbReference>
<dbReference type="PANTHER" id="PTHR30511">
    <property type="entry name" value="ALANINE RACEMASE"/>
    <property type="match status" value="1"/>
</dbReference>
<dbReference type="PANTHER" id="PTHR30511:SF0">
    <property type="entry name" value="ALANINE RACEMASE, CATABOLIC-RELATED"/>
    <property type="match status" value="1"/>
</dbReference>
<dbReference type="Pfam" id="PF00842">
    <property type="entry name" value="Ala_racemase_C"/>
    <property type="match status" value="1"/>
</dbReference>
<dbReference type="Pfam" id="PF01168">
    <property type="entry name" value="Ala_racemase_N"/>
    <property type="match status" value="1"/>
</dbReference>
<dbReference type="PRINTS" id="PR00992">
    <property type="entry name" value="ALARACEMASE"/>
</dbReference>
<dbReference type="SMART" id="SM01005">
    <property type="entry name" value="Ala_racemase_C"/>
    <property type="match status" value="1"/>
</dbReference>
<dbReference type="SUPFAM" id="SSF50621">
    <property type="entry name" value="Alanine racemase C-terminal domain-like"/>
    <property type="match status" value="1"/>
</dbReference>
<dbReference type="SUPFAM" id="SSF51419">
    <property type="entry name" value="PLP-binding barrel"/>
    <property type="match status" value="1"/>
</dbReference>
<dbReference type="PROSITE" id="PS00395">
    <property type="entry name" value="ALANINE_RACEMASE"/>
    <property type="match status" value="1"/>
</dbReference>
<feature type="chain" id="PRO_1000065970" description="Alanine racemase">
    <location>
        <begin position="1"/>
        <end position="353"/>
    </location>
</feature>
<feature type="active site" description="Proton acceptor; specific for D-alanine" evidence="1">
    <location>
        <position position="33"/>
    </location>
</feature>
<feature type="active site" description="Proton acceptor; specific for L-alanine" evidence="1">
    <location>
        <position position="250"/>
    </location>
</feature>
<feature type="binding site" evidence="1">
    <location>
        <position position="129"/>
    </location>
    <ligand>
        <name>substrate</name>
    </ligand>
</feature>
<feature type="binding site" evidence="1">
    <location>
        <position position="298"/>
    </location>
    <ligand>
        <name>substrate</name>
    </ligand>
</feature>
<feature type="modified residue" description="N6-(pyridoxal phosphate)lysine" evidence="1">
    <location>
        <position position="33"/>
    </location>
</feature>
<reference key="1">
    <citation type="journal article" date="2005" name="Arch. Microbiol.">
        <title>The genome sequence of an anaerobic aromatic-degrading denitrifying bacterium, strain EbN1.</title>
        <authorList>
            <person name="Rabus R."/>
            <person name="Kube M."/>
            <person name="Heider J."/>
            <person name="Beck A."/>
            <person name="Heitmann K."/>
            <person name="Widdel F."/>
            <person name="Reinhardt R."/>
        </authorList>
    </citation>
    <scope>NUCLEOTIDE SEQUENCE [LARGE SCALE GENOMIC DNA]</scope>
    <source>
        <strain>DSM 19018 / LMG 30748 / EbN1</strain>
    </source>
</reference>
<accession>Q5P3K0</accession>
<gene>
    <name type="primary">alr</name>
    <name type="ordered locus">AZOSEA19890</name>
    <name type="ORF">ebA3534</name>
</gene>
<comment type="function">
    <text evidence="1">Catalyzes the interconversion of L-alanine and D-alanine. May also act on other amino acids.</text>
</comment>
<comment type="catalytic activity">
    <reaction evidence="1">
        <text>L-alanine = D-alanine</text>
        <dbReference type="Rhea" id="RHEA:20249"/>
        <dbReference type="ChEBI" id="CHEBI:57416"/>
        <dbReference type="ChEBI" id="CHEBI:57972"/>
        <dbReference type="EC" id="5.1.1.1"/>
    </reaction>
</comment>
<comment type="cofactor">
    <cofactor evidence="1">
        <name>pyridoxal 5'-phosphate</name>
        <dbReference type="ChEBI" id="CHEBI:597326"/>
    </cofactor>
</comment>
<comment type="pathway">
    <text evidence="1">Amino-acid biosynthesis; D-alanine biosynthesis; D-alanine from L-alanine: step 1/1.</text>
</comment>
<comment type="similarity">
    <text evidence="1">Belongs to the alanine racemase family.</text>
</comment>
<proteinExistence type="inferred from homology"/>
<sequence length="353" mass="38208">MRPARALIDLDALRHNYHLARSRHGGRALAVVKANAYGHGAAQCARALAADADGFAVGFLEEALELRAAGIDQPILLLEGVFAPAELDEVVRHDLWIVVHHAEQLRIIDHARPALPLEVWLKMNSGMNRAGFLSHELRPAWQRLKDSGKVGGITLMTHFARADEPQVLATTEQLTAFDTATRELPGPRSLANSGAILGWPAAHRDWARPGILLYGADPMPDEPNGLRPVMTLESAVIAVREIPAGAPLGYGARFHAERATRAGLVALGYADGYPRSVPNGTPVAVDGLRTRLIGRVSMDLLTIDLTDLPDAGLGSRVELWGANIPVNRIAQAAKTISYELLCNVKRVRFEYSG</sequence>
<keyword id="KW-0413">Isomerase</keyword>
<keyword id="KW-0663">Pyridoxal phosphate</keyword>
<keyword id="KW-1185">Reference proteome</keyword>
<organism>
    <name type="scientific">Aromatoleum aromaticum (strain DSM 19018 / LMG 30748 / EbN1)</name>
    <name type="common">Azoarcus sp. (strain EbN1)</name>
    <dbReference type="NCBI Taxonomy" id="76114"/>
    <lineage>
        <taxon>Bacteria</taxon>
        <taxon>Pseudomonadati</taxon>
        <taxon>Pseudomonadota</taxon>
        <taxon>Betaproteobacteria</taxon>
        <taxon>Rhodocyclales</taxon>
        <taxon>Rhodocyclaceae</taxon>
        <taxon>Aromatoleum</taxon>
    </lineage>
</organism>
<protein>
    <recommendedName>
        <fullName evidence="1">Alanine racemase</fullName>
        <ecNumber evidence="1">5.1.1.1</ecNumber>
    </recommendedName>
</protein>
<name>ALR_AROAE</name>
<evidence type="ECO:0000255" key="1">
    <source>
        <dbReference type="HAMAP-Rule" id="MF_01201"/>
    </source>
</evidence>